<organism>
    <name type="scientific">Listeria innocua serovar 6a (strain ATCC BAA-680 / CLIP 11262)</name>
    <dbReference type="NCBI Taxonomy" id="272626"/>
    <lineage>
        <taxon>Bacteria</taxon>
        <taxon>Bacillati</taxon>
        <taxon>Bacillota</taxon>
        <taxon>Bacilli</taxon>
        <taxon>Bacillales</taxon>
        <taxon>Listeriaceae</taxon>
        <taxon>Listeria</taxon>
    </lineage>
</organism>
<proteinExistence type="inferred from homology"/>
<comment type="catalytic activity">
    <reaction>
        <text>Inactivates bleomycin B2 (a cytotoxic glycometallopeptide) by hydrolysis of a carboxyamide bond of beta-aminoalanine, but also shows general aminopeptidase activity. The specificity varies somewhat with source, but amino acid arylamides of Met, Leu and Ala are preferred.</text>
        <dbReference type="EC" id="3.4.22.40"/>
    </reaction>
</comment>
<comment type="similarity">
    <text evidence="2 3">Belongs to the peptidase C1 family.</text>
</comment>
<keyword id="KW-0031">Aminopeptidase</keyword>
<keyword id="KW-0378">Hydrolase</keyword>
<keyword id="KW-0645">Protease</keyword>
<keyword id="KW-0788">Thiol protease</keyword>
<dbReference type="EC" id="3.4.22.40"/>
<dbReference type="EMBL" id="AL596172">
    <property type="protein sequence ID" value="CAC97659.1"/>
    <property type="molecule type" value="Genomic_DNA"/>
</dbReference>
<dbReference type="PIR" id="AC1736">
    <property type="entry name" value="AC1736"/>
</dbReference>
<dbReference type="RefSeq" id="WP_010991187.1">
    <property type="nucleotide sequence ID" value="NC_003212.1"/>
</dbReference>
<dbReference type="SMR" id="Q928V0"/>
<dbReference type="STRING" id="272626.gene:17566793"/>
<dbReference type="MEROPS" id="C01.086"/>
<dbReference type="KEGG" id="lin:pepC"/>
<dbReference type="eggNOG" id="COG3579">
    <property type="taxonomic scope" value="Bacteria"/>
</dbReference>
<dbReference type="HOGENOM" id="CLU_038600_0_1_9"/>
<dbReference type="OrthoDB" id="1111399at2"/>
<dbReference type="Proteomes" id="UP000002513">
    <property type="component" value="Chromosome"/>
</dbReference>
<dbReference type="GO" id="GO:0005737">
    <property type="term" value="C:cytoplasm"/>
    <property type="evidence" value="ECO:0007669"/>
    <property type="project" value="TreeGrafter"/>
</dbReference>
<dbReference type="GO" id="GO:0070005">
    <property type="term" value="F:cysteine-type aminopeptidase activity"/>
    <property type="evidence" value="ECO:0007669"/>
    <property type="project" value="InterPro"/>
</dbReference>
<dbReference type="GO" id="GO:0004197">
    <property type="term" value="F:cysteine-type endopeptidase activity"/>
    <property type="evidence" value="ECO:0007669"/>
    <property type="project" value="UniProtKB-EC"/>
</dbReference>
<dbReference type="GO" id="GO:0043418">
    <property type="term" value="P:homocysteine catabolic process"/>
    <property type="evidence" value="ECO:0007669"/>
    <property type="project" value="TreeGrafter"/>
</dbReference>
<dbReference type="GO" id="GO:0006508">
    <property type="term" value="P:proteolysis"/>
    <property type="evidence" value="ECO:0007669"/>
    <property type="project" value="UniProtKB-KW"/>
</dbReference>
<dbReference type="GO" id="GO:0009636">
    <property type="term" value="P:response to toxic substance"/>
    <property type="evidence" value="ECO:0007669"/>
    <property type="project" value="TreeGrafter"/>
</dbReference>
<dbReference type="CDD" id="cd00585">
    <property type="entry name" value="Peptidase_C1B"/>
    <property type="match status" value="1"/>
</dbReference>
<dbReference type="FunFam" id="3.90.70.10:FF:000091">
    <property type="entry name" value="Aminopeptidase C"/>
    <property type="match status" value="1"/>
</dbReference>
<dbReference type="Gene3D" id="3.90.70.10">
    <property type="entry name" value="Cysteine proteinases"/>
    <property type="match status" value="1"/>
</dbReference>
<dbReference type="InterPro" id="IPR038765">
    <property type="entry name" value="Papain-like_cys_pep_sf"/>
</dbReference>
<dbReference type="InterPro" id="IPR000169">
    <property type="entry name" value="Pept_cys_AS"/>
</dbReference>
<dbReference type="InterPro" id="IPR025660">
    <property type="entry name" value="Pept_his_AS"/>
</dbReference>
<dbReference type="InterPro" id="IPR004134">
    <property type="entry name" value="Peptidase_C1B"/>
</dbReference>
<dbReference type="PANTHER" id="PTHR10363">
    <property type="entry name" value="BLEOMYCIN HYDROLASE"/>
    <property type="match status" value="1"/>
</dbReference>
<dbReference type="PANTHER" id="PTHR10363:SF2">
    <property type="entry name" value="BLEOMYCIN HYDROLASE"/>
    <property type="match status" value="1"/>
</dbReference>
<dbReference type="Pfam" id="PF03051">
    <property type="entry name" value="Peptidase_C1_2"/>
    <property type="match status" value="1"/>
</dbReference>
<dbReference type="PIRSF" id="PIRSF005700">
    <property type="entry name" value="PepC"/>
    <property type="match status" value="1"/>
</dbReference>
<dbReference type="SUPFAM" id="SSF54001">
    <property type="entry name" value="Cysteine proteinases"/>
    <property type="match status" value="1"/>
</dbReference>
<dbReference type="PROSITE" id="PS00139">
    <property type="entry name" value="THIOL_PROTEASE_CYS"/>
    <property type="match status" value="1"/>
</dbReference>
<dbReference type="PROSITE" id="PS00639">
    <property type="entry name" value="THIOL_PROTEASE_HIS"/>
    <property type="match status" value="1"/>
</dbReference>
<feature type="chain" id="PRO_0000050594" description="Aminopeptidase C">
    <location>
        <begin position="1"/>
        <end position="441"/>
    </location>
</feature>
<feature type="active site" evidence="1">
    <location>
        <position position="70"/>
    </location>
</feature>
<feature type="active site" evidence="1">
    <location>
        <position position="361"/>
    </location>
</feature>
<feature type="active site" evidence="1">
    <location>
        <position position="382"/>
    </location>
</feature>
<name>PEPC_LISIN</name>
<accession>Q928V0</accession>
<reference key="1">
    <citation type="journal article" date="2001" name="Science">
        <title>Comparative genomics of Listeria species.</title>
        <authorList>
            <person name="Glaser P."/>
            <person name="Frangeul L."/>
            <person name="Buchrieser C."/>
            <person name="Rusniok C."/>
            <person name="Amend A."/>
            <person name="Baquero F."/>
            <person name="Berche P."/>
            <person name="Bloecker H."/>
            <person name="Brandt P."/>
            <person name="Chakraborty T."/>
            <person name="Charbit A."/>
            <person name="Chetouani F."/>
            <person name="Couve E."/>
            <person name="de Daruvar A."/>
            <person name="Dehoux P."/>
            <person name="Domann E."/>
            <person name="Dominguez-Bernal G."/>
            <person name="Duchaud E."/>
            <person name="Durant L."/>
            <person name="Dussurget O."/>
            <person name="Entian K.-D."/>
            <person name="Fsihi H."/>
            <person name="Garcia-del Portillo F."/>
            <person name="Garrido P."/>
            <person name="Gautier L."/>
            <person name="Goebel W."/>
            <person name="Gomez-Lopez N."/>
            <person name="Hain T."/>
            <person name="Hauf J."/>
            <person name="Jackson D."/>
            <person name="Jones L.-M."/>
            <person name="Kaerst U."/>
            <person name="Kreft J."/>
            <person name="Kuhn M."/>
            <person name="Kunst F."/>
            <person name="Kurapkat G."/>
            <person name="Madueno E."/>
            <person name="Maitournam A."/>
            <person name="Mata Vicente J."/>
            <person name="Ng E."/>
            <person name="Nedjari H."/>
            <person name="Nordsiek G."/>
            <person name="Novella S."/>
            <person name="de Pablos B."/>
            <person name="Perez-Diaz J.-C."/>
            <person name="Purcell R."/>
            <person name="Remmel B."/>
            <person name="Rose M."/>
            <person name="Schlueter T."/>
            <person name="Simoes N."/>
            <person name="Tierrez A."/>
            <person name="Vazquez-Boland J.-A."/>
            <person name="Voss H."/>
            <person name="Wehland J."/>
            <person name="Cossart P."/>
        </authorList>
    </citation>
    <scope>NUCLEOTIDE SEQUENCE [LARGE SCALE GENOMIC DNA]</scope>
    <source>
        <strain>ATCC BAA-680 / CLIP 11262</strain>
    </source>
</reference>
<gene>
    <name type="primary">pepC</name>
    <name type="ordered locus">lin2432</name>
</gene>
<sequence>MSTEITFDQLESFSKKWRENPDKLVFQASIMKNGIKAATENPVSKATVQPVFSHEVHTDKVSNQQQSGRCWMFAALNTFRHKLNGTLGLKDFELSQNYTNFWDKLEKANYFLENIIETANEDEDSRLVSWLLDTPQQDGGQWDMLVSIIEKYGVVSKSAMPETFQSSKSADLNHLLNERLRTDAVILRKAVKEQKDTAGLKEEMLAEVYQLLVMTLGEPPKVFDFEYRNKDNEFKQDLQITPKEFYKRYVDMDLKDYIPLINAPTKDKPFNQAFTVDYLGNIVNGTPIKYLNVEMDVLKKATADQIKDGETVWFGCDVGQLSERTTGIMDTDIFLLNQAFGFKTAMTKAERLDYKHSMLTHAMVLTGVNIVNNEVNRWKVENSWGEKIGNNGYFVASDAWMDEFTFQVVVHKKYLSKELIEAFSNEPIALKPWDPMGSLAL</sequence>
<protein>
    <recommendedName>
        <fullName>Aminopeptidase C</fullName>
        <ecNumber>3.4.22.40</ecNumber>
    </recommendedName>
    <alternativeName>
        <fullName>Bleomycin hydrolase</fullName>
    </alternativeName>
</protein>
<evidence type="ECO:0000250" key="1"/>
<evidence type="ECO:0000255" key="2">
    <source>
        <dbReference type="PROSITE-ProRule" id="PRU10088"/>
    </source>
</evidence>
<evidence type="ECO:0000255" key="3">
    <source>
        <dbReference type="PROSITE-ProRule" id="PRU10089"/>
    </source>
</evidence>